<proteinExistence type="inferred from homology"/>
<dbReference type="EMBL" id="AM040264">
    <property type="protein sequence ID" value="CAJ10440.1"/>
    <property type="molecule type" value="Genomic_DNA"/>
</dbReference>
<dbReference type="RefSeq" id="WP_002963616.1">
    <property type="nucleotide sequence ID" value="NZ_KN046823.1"/>
</dbReference>
<dbReference type="SMR" id="Q2YMG5"/>
<dbReference type="STRING" id="359391.BAB1_0484"/>
<dbReference type="KEGG" id="bmf:BAB1_0484"/>
<dbReference type="PATRIC" id="fig|359391.11.peg.2523"/>
<dbReference type="HOGENOM" id="CLU_108696_5_1_5"/>
<dbReference type="UniPathway" id="UPA00094"/>
<dbReference type="Proteomes" id="UP000002719">
    <property type="component" value="Chromosome I"/>
</dbReference>
<dbReference type="GO" id="GO:0005829">
    <property type="term" value="C:cytosol"/>
    <property type="evidence" value="ECO:0007669"/>
    <property type="project" value="TreeGrafter"/>
</dbReference>
<dbReference type="GO" id="GO:0016020">
    <property type="term" value="C:membrane"/>
    <property type="evidence" value="ECO:0007669"/>
    <property type="project" value="GOC"/>
</dbReference>
<dbReference type="GO" id="GO:0000035">
    <property type="term" value="F:acyl binding"/>
    <property type="evidence" value="ECO:0007669"/>
    <property type="project" value="TreeGrafter"/>
</dbReference>
<dbReference type="GO" id="GO:0000036">
    <property type="term" value="F:acyl carrier activity"/>
    <property type="evidence" value="ECO:0007669"/>
    <property type="project" value="UniProtKB-UniRule"/>
</dbReference>
<dbReference type="GO" id="GO:0031177">
    <property type="term" value="F:phosphopantetheine binding"/>
    <property type="evidence" value="ECO:0007669"/>
    <property type="project" value="InterPro"/>
</dbReference>
<dbReference type="GO" id="GO:0009245">
    <property type="term" value="P:lipid A biosynthetic process"/>
    <property type="evidence" value="ECO:0007669"/>
    <property type="project" value="TreeGrafter"/>
</dbReference>
<dbReference type="FunFam" id="1.10.1200.10:FF:000001">
    <property type="entry name" value="Acyl carrier protein"/>
    <property type="match status" value="1"/>
</dbReference>
<dbReference type="Gene3D" id="1.10.1200.10">
    <property type="entry name" value="ACP-like"/>
    <property type="match status" value="1"/>
</dbReference>
<dbReference type="HAMAP" id="MF_01217">
    <property type="entry name" value="Acyl_carrier"/>
    <property type="match status" value="1"/>
</dbReference>
<dbReference type="InterPro" id="IPR003231">
    <property type="entry name" value="ACP"/>
</dbReference>
<dbReference type="InterPro" id="IPR036736">
    <property type="entry name" value="ACP-like_sf"/>
</dbReference>
<dbReference type="InterPro" id="IPR020806">
    <property type="entry name" value="PKS_PP-bd"/>
</dbReference>
<dbReference type="InterPro" id="IPR009081">
    <property type="entry name" value="PP-bd_ACP"/>
</dbReference>
<dbReference type="InterPro" id="IPR006162">
    <property type="entry name" value="Ppantetheine_attach_site"/>
</dbReference>
<dbReference type="NCBIfam" id="TIGR00517">
    <property type="entry name" value="acyl_carrier"/>
    <property type="match status" value="1"/>
</dbReference>
<dbReference type="NCBIfam" id="NF002148">
    <property type="entry name" value="PRK00982.1-2"/>
    <property type="match status" value="1"/>
</dbReference>
<dbReference type="NCBIfam" id="NF002149">
    <property type="entry name" value="PRK00982.1-3"/>
    <property type="match status" value="1"/>
</dbReference>
<dbReference type="NCBIfam" id="NF002150">
    <property type="entry name" value="PRK00982.1-4"/>
    <property type="match status" value="1"/>
</dbReference>
<dbReference type="NCBIfam" id="NF002151">
    <property type="entry name" value="PRK00982.1-5"/>
    <property type="match status" value="1"/>
</dbReference>
<dbReference type="PANTHER" id="PTHR20863">
    <property type="entry name" value="ACYL CARRIER PROTEIN"/>
    <property type="match status" value="1"/>
</dbReference>
<dbReference type="PANTHER" id="PTHR20863:SF76">
    <property type="entry name" value="CARRIER DOMAIN-CONTAINING PROTEIN"/>
    <property type="match status" value="1"/>
</dbReference>
<dbReference type="Pfam" id="PF00550">
    <property type="entry name" value="PP-binding"/>
    <property type="match status" value="1"/>
</dbReference>
<dbReference type="SMART" id="SM00823">
    <property type="entry name" value="PKS_PP"/>
    <property type="match status" value="1"/>
</dbReference>
<dbReference type="SUPFAM" id="SSF47336">
    <property type="entry name" value="ACP-like"/>
    <property type="match status" value="1"/>
</dbReference>
<dbReference type="PROSITE" id="PS50075">
    <property type="entry name" value="CARRIER"/>
    <property type="match status" value="1"/>
</dbReference>
<dbReference type="PROSITE" id="PS00012">
    <property type="entry name" value="PHOSPHOPANTETHEINE"/>
    <property type="match status" value="1"/>
</dbReference>
<reference key="1">
    <citation type="journal article" date="2005" name="Infect. Immun.">
        <title>Whole-genome analyses of speciation events in pathogenic Brucellae.</title>
        <authorList>
            <person name="Chain P.S."/>
            <person name="Comerci D.J."/>
            <person name="Tolmasky M.E."/>
            <person name="Larimer F.W."/>
            <person name="Malfatti S.A."/>
            <person name="Vergez L.M."/>
            <person name="Aguero F."/>
            <person name="Land M.L."/>
            <person name="Ugalde R.A."/>
            <person name="Garcia E."/>
        </authorList>
    </citation>
    <scope>NUCLEOTIDE SEQUENCE [LARGE SCALE GENOMIC DNA]</scope>
    <source>
        <strain>2308</strain>
    </source>
</reference>
<keyword id="KW-0963">Cytoplasm</keyword>
<keyword id="KW-0275">Fatty acid biosynthesis</keyword>
<keyword id="KW-0276">Fatty acid metabolism</keyword>
<keyword id="KW-0444">Lipid biosynthesis</keyword>
<keyword id="KW-0443">Lipid metabolism</keyword>
<keyword id="KW-0596">Phosphopantetheine</keyword>
<keyword id="KW-0597">Phosphoprotein</keyword>
<keyword id="KW-1185">Reference proteome</keyword>
<feature type="chain" id="PRO_1000066566" description="Acyl carrier protein">
    <location>
        <begin position="1"/>
        <end position="78"/>
    </location>
</feature>
<feature type="domain" description="Carrier" evidence="2">
    <location>
        <begin position="2"/>
        <end position="77"/>
    </location>
</feature>
<feature type="modified residue" description="O-(pantetheine 4'-phosphoryl)serine" evidence="2">
    <location>
        <position position="37"/>
    </location>
</feature>
<name>ACP_BRUA2</name>
<evidence type="ECO:0000255" key="1">
    <source>
        <dbReference type="HAMAP-Rule" id="MF_01217"/>
    </source>
</evidence>
<evidence type="ECO:0000255" key="2">
    <source>
        <dbReference type="PROSITE-ProRule" id="PRU00258"/>
    </source>
</evidence>
<accession>Q2YMG5</accession>
<sequence length="78" mass="8301">MSDTAERVKKIVVEHLGVDADKVTEGASFIDDLGADSLDTVELVMAFEEEFGVEIPDDAAETILTVGDAVKFIDKASA</sequence>
<protein>
    <recommendedName>
        <fullName evidence="1">Acyl carrier protein</fullName>
        <shortName evidence="1">ACP</shortName>
    </recommendedName>
</protein>
<gene>
    <name evidence="1" type="primary">acpP</name>
    <name type="ordered locus">BAB1_0484</name>
</gene>
<organism>
    <name type="scientific">Brucella abortus (strain 2308)</name>
    <dbReference type="NCBI Taxonomy" id="359391"/>
    <lineage>
        <taxon>Bacteria</taxon>
        <taxon>Pseudomonadati</taxon>
        <taxon>Pseudomonadota</taxon>
        <taxon>Alphaproteobacteria</taxon>
        <taxon>Hyphomicrobiales</taxon>
        <taxon>Brucellaceae</taxon>
        <taxon>Brucella/Ochrobactrum group</taxon>
        <taxon>Brucella</taxon>
    </lineage>
</organism>
<comment type="function">
    <text evidence="1">Carrier of the growing fatty acid chain in fatty acid biosynthesis.</text>
</comment>
<comment type="pathway">
    <text evidence="1">Lipid metabolism; fatty acid biosynthesis.</text>
</comment>
<comment type="subcellular location">
    <subcellularLocation>
        <location evidence="1">Cytoplasm</location>
    </subcellularLocation>
</comment>
<comment type="PTM">
    <text evidence="1">4'-phosphopantetheine is transferred from CoA to a specific serine of apo-ACP by AcpS. This modification is essential for activity because fatty acids are bound in thioester linkage to the sulfhydryl of the prosthetic group.</text>
</comment>
<comment type="similarity">
    <text evidence="1">Belongs to the acyl carrier protein (ACP) family.</text>
</comment>